<accession>B5BP46</accession>
<name>YP52_SCHPO</name>
<dbReference type="EC" id="2.5.1.18"/>
<dbReference type="EMBL" id="AB325691">
    <property type="protein sequence ID" value="BAG68902.1"/>
    <property type="molecule type" value="Genomic_DNA"/>
</dbReference>
<dbReference type="SMR" id="B5BP46"/>
<dbReference type="FunCoup" id="B5BP46">
    <property type="interactions" value="200"/>
</dbReference>
<dbReference type="STRING" id="284812.B5BP46"/>
<dbReference type="iPTMnet" id="B5BP46"/>
<dbReference type="PaxDb" id="4896-SPBC460.02c.1"/>
<dbReference type="EnsemblFungi" id="SPBC460.02c.1">
    <property type="protein sequence ID" value="SPBC460.02c.1:pep"/>
    <property type="gene ID" value="SPBC460.02c"/>
</dbReference>
<dbReference type="PomBase" id="SPBC460.02c"/>
<dbReference type="VEuPathDB" id="FungiDB:SPBC460.02c"/>
<dbReference type="eggNOG" id="KOG0867">
    <property type="taxonomic scope" value="Eukaryota"/>
</dbReference>
<dbReference type="HOGENOM" id="CLU_011226_3_2_1"/>
<dbReference type="InParanoid" id="B5BP46"/>
<dbReference type="OMA" id="KAPRATM"/>
<dbReference type="PRO" id="PR:B5BP46"/>
<dbReference type="GO" id="GO:0005737">
    <property type="term" value="C:cytoplasm"/>
    <property type="evidence" value="ECO:0000318"/>
    <property type="project" value="GO_Central"/>
</dbReference>
<dbReference type="GO" id="GO:0005634">
    <property type="term" value="C:nucleus"/>
    <property type="evidence" value="ECO:0000318"/>
    <property type="project" value="GO_Central"/>
</dbReference>
<dbReference type="GO" id="GO:0004364">
    <property type="term" value="F:glutathione transferase activity"/>
    <property type="evidence" value="ECO:0000255"/>
    <property type="project" value="PomBase"/>
</dbReference>
<dbReference type="GO" id="GO:0002182">
    <property type="term" value="P:cytoplasmic translational elongation"/>
    <property type="evidence" value="ECO:0000266"/>
    <property type="project" value="PomBase"/>
</dbReference>
<dbReference type="CDD" id="cd03181">
    <property type="entry name" value="GST_C_EF1Bgamma_like"/>
    <property type="match status" value="1"/>
</dbReference>
<dbReference type="CDD" id="cd03044">
    <property type="entry name" value="GST_N_EF1Bgamma"/>
    <property type="match status" value="1"/>
</dbReference>
<dbReference type="FunFam" id="3.40.30.10:FF:000142">
    <property type="entry name" value="Elongation factor 1 gamma"/>
    <property type="match status" value="1"/>
</dbReference>
<dbReference type="Gene3D" id="1.20.1050.10">
    <property type="match status" value="1"/>
</dbReference>
<dbReference type="Gene3D" id="3.40.30.10">
    <property type="entry name" value="Glutaredoxin"/>
    <property type="match status" value="1"/>
</dbReference>
<dbReference type="InterPro" id="IPR050802">
    <property type="entry name" value="EF-GSTs"/>
</dbReference>
<dbReference type="InterPro" id="IPR010987">
    <property type="entry name" value="Glutathione-S-Trfase_C-like"/>
</dbReference>
<dbReference type="InterPro" id="IPR036282">
    <property type="entry name" value="Glutathione-S-Trfase_C_sf"/>
</dbReference>
<dbReference type="InterPro" id="IPR004045">
    <property type="entry name" value="Glutathione_S-Trfase_N"/>
</dbReference>
<dbReference type="InterPro" id="IPR004046">
    <property type="entry name" value="GST_C"/>
</dbReference>
<dbReference type="InterPro" id="IPR036249">
    <property type="entry name" value="Thioredoxin-like_sf"/>
</dbReference>
<dbReference type="PANTHER" id="PTHR43986">
    <property type="entry name" value="ELONGATION FACTOR 1-GAMMA"/>
    <property type="match status" value="1"/>
</dbReference>
<dbReference type="PANTHER" id="PTHR43986:SF1">
    <property type="entry name" value="ELONGATION FACTOR 1-GAMMA"/>
    <property type="match status" value="1"/>
</dbReference>
<dbReference type="Pfam" id="PF00043">
    <property type="entry name" value="GST_C"/>
    <property type="match status" value="1"/>
</dbReference>
<dbReference type="Pfam" id="PF02798">
    <property type="entry name" value="GST_N"/>
    <property type="match status" value="1"/>
</dbReference>
<dbReference type="SUPFAM" id="SSF47616">
    <property type="entry name" value="GST C-terminal domain-like"/>
    <property type="match status" value="1"/>
</dbReference>
<dbReference type="SUPFAM" id="SSF52833">
    <property type="entry name" value="Thioredoxin-like"/>
    <property type="match status" value="1"/>
</dbReference>
<dbReference type="PROSITE" id="PS50405">
    <property type="entry name" value="GST_CTER"/>
    <property type="match status" value="1"/>
</dbReference>
<dbReference type="PROSITE" id="PS50404">
    <property type="entry name" value="GST_NTER"/>
    <property type="match status" value="1"/>
</dbReference>
<keyword id="KW-0963">Cytoplasm</keyword>
<keyword id="KW-0808">Transferase</keyword>
<sequence>MFLGTIYSFKTNTRTPCLLELAKRLDLQVDLVETYHHKFPTDLAAKFPLQKLPVFIGADGFELSEVIAIFKYFYEKGKHNDKEGLGPINEIEEAEMLKWMCFINFDIVTPQIVRPWVDMFRGSVPYEDKAFKESAARAIDSLKIINELVKDRTYLVGDRFTLADLFFGSMLRRFFHSIIDEKTRKELPHLTRYYVTMFHQAKLEAYYPLELPLTVTVPNN</sequence>
<comment type="function">
    <text evidence="1">Involved in the oxidative stress response and detoxification.</text>
</comment>
<comment type="catalytic activity">
    <reaction>
        <text>RX + glutathione = an S-substituted glutathione + a halide anion + H(+)</text>
        <dbReference type="Rhea" id="RHEA:16437"/>
        <dbReference type="ChEBI" id="CHEBI:15378"/>
        <dbReference type="ChEBI" id="CHEBI:16042"/>
        <dbReference type="ChEBI" id="CHEBI:17792"/>
        <dbReference type="ChEBI" id="CHEBI:57925"/>
        <dbReference type="ChEBI" id="CHEBI:90779"/>
        <dbReference type="EC" id="2.5.1.18"/>
    </reaction>
</comment>
<comment type="subcellular location">
    <subcellularLocation>
        <location>Cytoplasm</location>
    </subcellularLocation>
</comment>
<comment type="similarity">
    <text evidence="2">Belongs to the GST superfamily.</text>
</comment>
<evidence type="ECO:0000250" key="1"/>
<evidence type="ECO:0000305" key="2"/>
<organism>
    <name type="scientific">Schizosaccharomyces pombe (strain 972 / ATCC 24843)</name>
    <name type="common">Fission yeast</name>
    <dbReference type="NCBI Taxonomy" id="284812"/>
    <lineage>
        <taxon>Eukaryota</taxon>
        <taxon>Fungi</taxon>
        <taxon>Dikarya</taxon>
        <taxon>Ascomycota</taxon>
        <taxon>Taphrinomycotina</taxon>
        <taxon>Schizosaccharomycetes</taxon>
        <taxon>Schizosaccharomycetales</taxon>
        <taxon>Schizosaccharomycetaceae</taxon>
        <taxon>Schizosaccharomyces</taxon>
    </lineage>
</organism>
<reference key="1">
    <citation type="journal article" date="2008" name="Yeast">
        <title>The gap-filling sequence on the left arm of chromosome 2 in fission yeast Schizosaccharomyces pombe.</title>
        <authorList>
            <person name="Sasaki M."/>
            <person name="Idiris A."/>
            <person name="Tada A."/>
            <person name="Kumagai H."/>
            <person name="Giga-Hama Y."/>
            <person name="Tohda H."/>
        </authorList>
    </citation>
    <scope>NUCLEOTIDE SEQUENCE [LARGE SCALE GENOMIC DNA]</scope>
    <source>
        <strain>972 / ATCC 24843</strain>
    </source>
</reference>
<protein>
    <recommendedName>
        <fullName>Putative glutathione S-transferase C460.02c</fullName>
        <ecNumber>2.5.1.18</ecNumber>
    </recommendedName>
</protein>
<proteinExistence type="inferred from homology"/>
<gene>
    <name type="ORF">SPBC460.02c</name>
</gene>
<feature type="chain" id="PRO_0000415923" description="Putative glutathione S-transferase C460.02c">
    <location>
        <begin position="1"/>
        <end position="220"/>
    </location>
</feature>
<feature type="domain" description="GST N-terminal">
    <location>
        <begin position="1"/>
        <end position="81"/>
    </location>
</feature>
<feature type="domain" description="GST C-terminal">
    <location>
        <begin position="89"/>
        <end position="216"/>
    </location>
</feature>